<name>RL32_PSEFS</name>
<gene>
    <name evidence="1" type="primary">rpmF</name>
    <name type="ordered locus">PFLU_4708</name>
</gene>
<feature type="chain" id="PRO_1000205269" description="Large ribosomal subunit protein bL32">
    <location>
        <begin position="1"/>
        <end position="60"/>
    </location>
</feature>
<feature type="region of interest" description="Disordered" evidence="2">
    <location>
        <begin position="1"/>
        <end position="44"/>
    </location>
</feature>
<feature type="compositionally biased region" description="Basic and acidic residues" evidence="2">
    <location>
        <begin position="11"/>
        <end position="22"/>
    </location>
</feature>
<protein>
    <recommendedName>
        <fullName evidence="1">Large ribosomal subunit protein bL32</fullName>
    </recommendedName>
    <alternativeName>
        <fullName evidence="3">50S ribosomal protein L32</fullName>
    </alternativeName>
</protein>
<dbReference type="EMBL" id="AM181176">
    <property type="protein sequence ID" value="CAY51514.1"/>
    <property type="molecule type" value="Genomic_DNA"/>
</dbReference>
<dbReference type="RefSeq" id="WP_003179396.1">
    <property type="nucleotide sequence ID" value="NC_012660.1"/>
</dbReference>
<dbReference type="SMR" id="C3K0N7"/>
<dbReference type="STRING" id="294.SRM1_04108"/>
<dbReference type="GeneID" id="98112605"/>
<dbReference type="eggNOG" id="COG0333">
    <property type="taxonomic scope" value="Bacteria"/>
</dbReference>
<dbReference type="HOGENOM" id="CLU_129084_2_1_6"/>
<dbReference type="OrthoDB" id="9801927at2"/>
<dbReference type="GO" id="GO:0015934">
    <property type="term" value="C:large ribosomal subunit"/>
    <property type="evidence" value="ECO:0007669"/>
    <property type="project" value="InterPro"/>
</dbReference>
<dbReference type="GO" id="GO:0003735">
    <property type="term" value="F:structural constituent of ribosome"/>
    <property type="evidence" value="ECO:0007669"/>
    <property type="project" value="InterPro"/>
</dbReference>
<dbReference type="GO" id="GO:0006412">
    <property type="term" value="P:translation"/>
    <property type="evidence" value="ECO:0007669"/>
    <property type="project" value="UniProtKB-UniRule"/>
</dbReference>
<dbReference type="HAMAP" id="MF_00340">
    <property type="entry name" value="Ribosomal_bL32"/>
    <property type="match status" value="1"/>
</dbReference>
<dbReference type="InterPro" id="IPR002677">
    <property type="entry name" value="Ribosomal_bL32"/>
</dbReference>
<dbReference type="InterPro" id="IPR044957">
    <property type="entry name" value="Ribosomal_bL32_bact"/>
</dbReference>
<dbReference type="InterPro" id="IPR011332">
    <property type="entry name" value="Ribosomal_zn-bd"/>
</dbReference>
<dbReference type="NCBIfam" id="TIGR01031">
    <property type="entry name" value="rpmF_bact"/>
    <property type="match status" value="1"/>
</dbReference>
<dbReference type="PANTHER" id="PTHR35534">
    <property type="entry name" value="50S RIBOSOMAL PROTEIN L32"/>
    <property type="match status" value="1"/>
</dbReference>
<dbReference type="PANTHER" id="PTHR35534:SF1">
    <property type="entry name" value="LARGE RIBOSOMAL SUBUNIT PROTEIN BL32"/>
    <property type="match status" value="1"/>
</dbReference>
<dbReference type="Pfam" id="PF01783">
    <property type="entry name" value="Ribosomal_L32p"/>
    <property type="match status" value="1"/>
</dbReference>
<dbReference type="SUPFAM" id="SSF57829">
    <property type="entry name" value="Zn-binding ribosomal proteins"/>
    <property type="match status" value="1"/>
</dbReference>
<sequence length="60" mass="6757">MAVQQNKKSRSARDMRRSHDALEASTLSVEKTTGEVHLRHHVSPEGVYRGRKVIDKGADE</sequence>
<accession>C3K0N7</accession>
<organism>
    <name type="scientific">Pseudomonas fluorescens (strain SBW25)</name>
    <dbReference type="NCBI Taxonomy" id="216595"/>
    <lineage>
        <taxon>Bacteria</taxon>
        <taxon>Pseudomonadati</taxon>
        <taxon>Pseudomonadota</taxon>
        <taxon>Gammaproteobacteria</taxon>
        <taxon>Pseudomonadales</taxon>
        <taxon>Pseudomonadaceae</taxon>
        <taxon>Pseudomonas</taxon>
    </lineage>
</organism>
<keyword id="KW-0687">Ribonucleoprotein</keyword>
<keyword id="KW-0689">Ribosomal protein</keyword>
<evidence type="ECO:0000255" key="1">
    <source>
        <dbReference type="HAMAP-Rule" id="MF_00340"/>
    </source>
</evidence>
<evidence type="ECO:0000256" key="2">
    <source>
        <dbReference type="SAM" id="MobiDB-lite"/>
    </source>
</evidence>
<evidence type="ECO:0000305" key="3"/>
<comment type="similarity">
    <text evidence="1">Belongs to the bacterial ribosomal protein bL32 family.</text>
</comment>
<reference key="1">
    <citation type="journal article" date="2009" name="Genome Biol.">
        <title>Genomic and genetic analyses of diversity and plant interactions of Pseudomonas fluorescens.</title>
        <authorList>
            <person name="Silby M.W."/>
            <person name="Cerdeno-Tarraga A.M."/>
            <person name="Vernikos G.S."/>
            <person name="Giddens S.R."/>
            <person name="Jackson R.W."/>
            <person name="Preston G.M."/>
            <person name="Zhang X.-X."/>
            <person name="Moon C.D."/>
            <person name="Gehrig S.M."/>
            <person name="Godfrey S.A.C."/>
            <person name="Knight C.G."/>
            <person name="Malone J.G."/>
            <person name="Robinson Z."/>
            <person name="Spiers A.J."/>
            <person name="Harris S."/>
            <person name="Challis G.L."/>
            <person name="Yaxley A.M."/>
            <person name="Harris D."/>
            <person name="Seeger K."/>
            <person name="Murphy L."/>
            <person name="Rutter S."/>
            <person name="Squares R."/>
            <person name="Quail M.A."/>
            <person name="Saunders E."/>
            <person name="Mavromatis K."/>
            <person name="Brettin T.S."/>
            <person name="Bentley S.D."/>
            <person name="Hothersall J."/>
            <person name="Stephens E."/>
            <person name="Thomas C.M."/>
            <person name="Parkhill J."/>
            <person name="Levy S.B."/>
            <person name="Rainey P.B."/>
            <person name="Thomson N.R."/>
        </authorList>
    </citation>
    <scope>NUCLEOTIDE SEQUENCE [LARGE SCALE GENOMIC DNA]</scope>
    <source>
        <strain>SBW25</strain>
    </source>
</reference>
<proteinExistence type="inferred from homology"/>